<comment type="function">
    <text evidence="1">Probable tubulin polyglutamylase that generates side chains of glutamate on the gamma-carboxyl group of specific glutamate residues within the C-terminal tail of target proteins. Similar to TTLL1, may acquire enzymatic activity only in complex with other proteins as it is most likely lacking domains important for autonomous activity. Mediates tubulin polyglutamylation which induces establishment of microtubule heterogeneity in sperm flagella, thereby playing a role in normal motile flagella axoneme structure and sperm flagella beating pattern.</text>
</comment>
<comment type="catalytic activity">
    <reaction evidence="1">
        <text>(L-glutamyl)(n)-gamma-L-glutamyl-L-glutamyl-[protein] + L-glutamate + ATP = (L-glutamyl)(n+1)-gamma-L-glutamyl-L-glutamyl-[protein] + ADP + phosphate + H(+)</text>
        <dbReference type="Rhea" id="RHEA:60148"/>
        <dbReference type="Rhea" id="RHEA-COMP:15519"/>
        <dbReference type="Rhea" id="RHEA-COMP:15675"/>
        <dbReference type="ChEBI" id="CHEBI:15378"/>
        <dbReference type="ChEBI" id="CHEBI:29985"/>
        <dbReference type="ChEBI" id="CHEBI:30616"/>
        <dbReference type="ChEBI" id="CHEBI:43474"/>
        <dbReference type="ChEBI" id="CHEBI:143623"/>
        <dbReference type="ChEBI" id="CHEBI:456216"/>
    </reaction>
    <physiologicalReaction direction="left-to-right" evidence="1">
        <dbReference type="Rhea" id="RHEA:60149"/>
    </physiologicalReaction>
</comment>
<comment type="cofactor">
    <cofactor evidence="2">
        <name>Mg(2+)</name>
        <dbReference type="ChEBI" id="CHEBI:18420"/>
    </cofactor>
</comment>
<comment type="subcellular location">
    <subcellularLocation>
        <location evidence="1">Cytoplasm</location>
        <location evidence="1">Cytoskeleton</location>
        <location evidence="1">Cilium basal body</location>
    </subcellularLocation>
    <subcellularLocation>
        <location evidence="1">Cytoplasm</location>
        <location evidence="1">Cytoskeleton</location>
    </subcellularLocation>
    <subcellularLocation>
        <location evidence="1">Cytoplasm</location>
        <location evidence="1">Cytoskeleton</location>
        <location evidence="1">Flagellum axoneme</location>
    </subcellularLocation>
</comment>
<comment type="domain">
    <text evidence="2">Gln-155 is the main determinant for regioselectivity, which segregates between initiases and elongases in all tubulin--tyrosine ligase family. A glutamine residue at this position is found in elongases TTLL6, TTLL9, TTLL11, TTLL13, TTLL10 and favors glutamate-chain elongation, whereas an arginine residue is found in initiases TTLL2, TTLL4, TTLL5, TTLL3, TTLL8 and favors initiation.</text>
</comment>
<comment type="similarity">
    <text evidence="5">Belongs to the tubulin--tyrosine ligase family.</text>
</comment>
<proteinExistence type="evidence at transcript level"/>
<sequence>MSRQKSQTSKGHGASKGKEREQRTLIRFKTTLMNTLMDVLRHRPGWVEVKDEGEWDFYWCDVSWLRENFDHTYMDEHVRISHFRNHYELTRKNYMVKNLKRFRKQLEREAGKTEAAKCDFFPKTFEMPCEYHLFVEEFRKNPGITWIMKPVARSQGKGIFLFRRLKDIMDWRKGTAGKKVTSVETQATRANVNPSGSHDTRSSDDQKDDIPVENYVAQRYVENPYLIGGRKFDLRVYVLVMSYIPLRAWLYRDGFARFSNTRFTLNSIDDHYVHLTNVAVQKTSPDYHPKKGCKWTLQRFRQYLASKHGPKAVETLFSDMDNIFIKSLQSVQKVIISDKHCFELYGYDILIDQDLKPWLLEVNASPSLTASSQEDYELKTCLLEDTLHVVDMEARLTGKEKRVGGFDLMWNDGPVSREEGPCDLSGMGNFVTNTHLGCINDRKEQLRQLFRSLQVQKKASS</sequence>
<accession>Q641W7</accession>
<name>TTLL9_RAT</name>
<feature type="chain" id="PRO_0000324519" description="Probable tubulin polyglutamylase TTLL9">
    <location>
        <begin position="1"/>
        <end position="461"/>
    </location>
</feature>
<feature type="domain" description="TTL" evidence="3">
    <location>
        <begin position="22"/>
        <end position="402"/>
    </location>
</feature>
<feature type="region of interest" description="Disordered" evidence="4">
    <location>
        <begin position="1"/>
        <end position="20"/>
    </location>
</feature>
<feature type="region of interest" description="Disordered" evidence="4">
    <location>
        <begin position="186"/>
        <end position="208"/>
    </location>
</feature>
<feature type="compositionally biased region" description="Polar residues" evidence="4">
    <location>
        <begin position="1"/>
        <end position="10"/>
    </location>
</feature>
<feature type="compositionally biased region" description="Polar residues" evidence="4">
    <location>
        <begin position="186"/>
        <end position="197"/>
    </location>
</feature>
<feature type="compositionally biased region" description="Basic and acidic residues" evidence="4">
    <location>
        <begin position="198"/>
        <end position="208"/>
    </location>
</feature>
<feature type="binding site" evidence="2">
    <location>
        <position position="149"/>
    </location>
    <ligand>
        <name>ATP</name>
        <dbReference type="ChEBI" id="CHEBI:30616"/>
    </ligand>
</feature>
<feature type="binding site" evidence="2">
    <location>
        <begin position="155"/>
        <end position="156"/>
    </location>
    <ligand>
        <name>ATP</name>
        <dbReference type="ChEBI" id="CHEBI:30616"/>
    </ligand>
</feature>
<feature type="binding site" evidence="2">
    <location>
        <position position="155"/>
    </location>
    <ligand>
        <name>a protein</name>
        <dbReference type="ChEBI" id="CHEBI:16541"/>
    </ligand>
    <ligandPart>
        <name>L-glutamate residue</name>
        <dbReference type="ChEBI" id="CHEBI:29973"/>
        <note>L-glutamate acceptor residue in protein target</note>
    </ligandPart>
</feature>
<feature type="binding site" evidence="2">
    <location>
        <begin position="218"/>
        <end position="221"/>
    </location>
    <ligand>
        <name>ATP</name>
        <dbReference type="ChEBI" id="CHEBI:30616"/>
    </ligand>
</feature>
<feature type="binding site" evidence="2">
    <location>
        <begin position="231"/>
        <end position="233"/>
    </location>
    <ligand>
        <name>ATP</name>
        <dbReference type="ChEBI" id="CHEBI:30616"/>
    </ligand>
</feature>
<feature type="binding site" evidence="2">
    <location>
        <position position="257"/>
    </location>
    <ligand>
        <name>L-glutamate</name>
        <dbReference type="ChEBI" id="CHEBI:29985"/>
    </ligand>
</feature>
<feature type="binding site" evidence="2">
    <location>
        <begin position="276"/>
        <end position="277"/>
    </location>
    <ligand>
        <name>ATP</name>
        <dbReference type="ChEBI" id="CHEBI:30616"/>
    </ligand>
</feature>
<feature type="binding site" evidence="2">
    <location>
        <position position="294"/>
    </location>
    <ligand>
        <name>L-glutamate</name>
        <dbReference type="ChEBI" id="CHEBI:29985"/>
    </ligand>
</feature>
<feature type="binding site" evidence="2">
    <location>
        <position position="348"/>
    </location>
    <ligand>
        <name>Mg(2+)</name>
        <dbReference type="ChEBI" id="CHEBI:18420"/>
        <label>1</label>
    </ligand>
</feature>
<feature type="binding site" evidence="2">
    <location>
        <position position="361"/>
    </location>
    <ligand>
        <name>Mg(2+)</name>
        <dbReference type="ChEBI" id="CHEBI:18420"/>
        <label>1</label>
    </ligand>
</feature>
<feature type="binding site" evidence="2">
    <location>
        <position position="361"/>
    </location>
    <ligand>
        <name>Mg(2+)</name>
        <dbReference type="ChEBI" id="CHEBI:18420"/>
        <label>2</label>
    </ligand>
</feature>
<feature type="binding site" evidence="2">
    <location>
        <position position="363"/>
    </location>
    <ligand>
        <name>Mg(2+)</name>
        <dbReference type="ChEBI" id="CHEBI:18420"/>
        <label>2</label>
    </ligand>
</feature>
<feature type="binding site" evidence="2">
    <location>
        <position position="379"/>
    </location>
    <ligand>
        <name>L-glutamate</name>
        <dbReference type="ChEBI" id="CHEBI:29985"/>
    </ligand>
</feature>
<feature type="site" description="Essential for specifying alpha-elongation versus initiation step of the polyglutamylase activity" evidence="2">
    <location>
        <position position="155"/>
    </location>
</feature>
<gene>
    <name type="primary">Ttll9</name>
</gene>
<protein>
    <recommendedName>
        <fullName evidence="1">Probable tubulin polyglutamylase TTLL9</fullName>
        <ecNumber evidence="1">6.3.2.-</ecNumber>
    </recommendedName>
    <alternativeName>
        <fullName>Tubulin--tyrosine ligase-like protein 9</fullName>
    </alternativeName>
</protein>
<dbReference type="EC" id="6.3.2.-" evidence="1"/>
<dbReference type="EMBL" id="BC082105">
    <property type="protein sequence ID" value="AAH82105.1"/>
    <property type="molecule type" value="mRNA"/>
</dbReference>
<dbReference type="RefSeq" id="NP_001014073.1">
    <property type="nucleotide sequence ID" value="NM_001014051.1"/>
</dbReference>
<dbReference type="SMR" id="Q641W7"/>
<dbReference type="FunCoup" id="Q641W7">
    <property type="interactions" value="567"/>
</dbReference>
<dbReference type="STRING" id="10116.ENSRNOP00000059385"/>
<dbReference type="PhosphoSitePlus" id="Q641W7"/>
<dbReference type="PaxDb" id="10116-ENSRNOP00000059385"/>
<dbReference type="Ensembl" id="ENSRNOT00000064196.3">
    <property type="protein sequence ID" value="ENSRNOP00000059385.1"/>
    <property type="gene ID" value="ENSRNOG00000008596.8"/>
</dbReference>
<dbReference type="GeneID" id="311548"/>
<dbReference type="KEGG" id="rno:311548"/>
<dbReference type="UCSC" id="RGD:1359622">
    <property type="organism name" value="rat"/>
</dbReference>
<dbReference type="AGR" id="RGD:1359622"/>
<dbReference type="CTD" id="164395"/>
<dbReference type="RGD" id="1359622">
    <property type="gene designation" value="Ttll9"/>
</dbReference>
<dbReference type="eggNOG" id="KOG2157">
    <property type="taxonomic scope" value="Eukaryota"/>
</dbReference>
<dbReference type="GeneTree" id="ENSGT00940000159879"/>
<dbReference type="InParanoid" id="Q641W7"/>
<dbReference type="OrthoDB" id="4060at9989"/>
<dbReference type="PhylomeDB" id="Q641W7"/>
<dbReference type="TreeFam" id="TF313087"/>
<dbReference type="Reactome" id="R-RNO-8955332">
    <property type="pathway name" value="Carboxyterminal post-translational modifications of tubulin"/>
</dbReference>
<dbReference type="PRO" id="PR:Q641W7"/>
<dbReference type="Proteomes" id="UP000002494">
    <property type="component" value="Chromosome 3"/>
</dbReference>
<dbReference type="Bgee" id="ENSRNOG00000008596">
    <property type="expression patterns" value="Expressed in testis and 9 other cell types or tissues"/>
</dbReference>
<dbReference type="ExpressionAtlas" id="Q641W7">
    <property type="expression patterns" value="baseline and differential"/>
</dbReference>
<dbReference type="GO" id="GO:0036064">
    <property type="term" value="C:ciliary basal body"/>
    <property type="evidence" value="ECO:0000266"/>
    <property type="project" value="RGD"/>
</dbReference>
<dbReference type="GO" id="GO:0005737">
    <property type="term" value="C:cytoplasm"/>
    <property type="evidence" value="ECO:0007669"/>
    <property type="project" value="UniProtKB-KW"/>
</dbReference>
<dbReference type="GO" id="GO:0005874">
    <property type="term" value="C:microtubule"/>
    <property type="evidence" value="ECO:0007669"/>
    <property type="project" value="UniProtKB-KW"/>
</dbReference>
<dbReference type="GO" id="GO:0031514">
    <property type="term" value="C:motile cilium"/>
    <property type="evidence" value="ECO:0007669"/>
    <property type="project" value="UniProtKB-KW"/>
</dbReference>
<dbReference type="GO" id="GO:0005524">
    <property type="term" value="F:ATP binding"/>
    <property type="evidence" value="ECO:0007669"/>
    <property type="project" value="UniProtKB-KW"/>
</dbReference>
<dbReference type="GO" id="GO:0046872">
    <property type="term" value="F:metal ion binding"/>
    <property type="evidence" value="ECO:0007669"/>
    <property type="project" value="UniProtKB-KW"/>
</dbReference>
<dbReference type="GO" id="GO:0106438">
    <property type="term" value="F:protein-glutamic acid ligase activity, elongating"/>
    <property type="evidence" value="ECO:0007669"/>
    <property type="project" value="RHEA"/>
</dbReference>
<dbReference type="GO" id="GO:0015631">
    <property type="term" value="F:tubulin binding"/>
    <property type="evidence" value="ECO:0000318"/>
    <property type="project" value="GO_Central"/>
</dbReference>
<dbReference type="GO" id="GO:0070740">
    <property type="term" value="F:tubulin-glutamic acid ligase activity"/>
    <property type="evidence" value="ECO:0000250"/>
    <property type="project" value="UniProtKB"/>
</dbReference>
<dbReference type="GO" id="GO:0030317">
    <property type="term" value="P:flagellated sperm motility"/>
    <property type="evidence" value="ECO:0000266"/>
    <property type="project" value="RGD"/>
</dbReference>
<dbReference type="GO" id="GO:0000226">
    <property type="term" value="P:microtubule cytoskeleton organization"/>
    <property type="evidence" value="ECO:0000318"/>
    <property type="project" value="GO_Central"/>
</dbReference>
<dbReference type="GO" id="GO:0036211">
    <property type="term" value="P:protein modification process"/>
    <property type="evidence" value="ECO:0007669"/>
    <property type="project" value="InterPro"/>
</dbReference>
<dbReference type="Gene3D" id="3.30.1490.20">
    <property type="entry name" value="ATP-grasp fold, A domain"/>
    <property type="match status" value="1"/>
</dbReference>
<dbReference type="Gene3D" id="3.30.470.20">
    <property type="entry name" value="ATP-grasp fold, B domain"/>
    <property type="match status" value="1"/>
</dbReference>
<dbReference type="InterPro" id="IPR013815">
    <property type="entry name" value="ATP_grasp_subdomain_1"/>
</dbReference>
<dbReference type="InterPro" id="IPR004344">
    <property type="entry name" value="TTL/TTLL_fam"/>
</dbReference>
<dbReference type="PANTHER" id="PTHR12241">
    <property type="entry name" value="TUBULIN POLYGLUTAMYLASE"/>
    <property type="match status" value="1"/>
</dbReference>
<dbReference type="PANTHER" id="PTHR12241:SF39">
    <property type="entry name" value="TUBULIN POLYGLUTAMYLASE TTLL9-RELATED"/>
    <property type="match status" value="1"/>
</dbReference>
<dbReference type="Pfam" id="PF03133">
    <property type="entry name" value="TTL"/>
    <property type="match status" value="1"/>
</dbReference>
<dbReference type="SUPFAM" id="SSF56059">
    <property type="entry name" value="Glutathione synthetase ATP-binding domain-like"/>
    <property type="match status" value="1"/>
</dbReference>
<dbReference type="PROSITE" id="PS51221">
    <property type="entry name" value="TTL"/>
    <property type="match status" value="1"/>
</dbReference>
<evidence type="ECO:0000250" key="1">
    <source>
        <dbReference type="UniProtKB" id="A2APC3"/>
    </source>
</evidence>
<evidence type="ECO:0000250" key="2">
    <source>
        <dbReference type="UniProtKB" id="A4Q9E8"/>
    </source>
</evidence>
<evidence type="ECO:0000255" key="3">
    <source>
        <dbReference type="PROSITE-ProRule" id="PRU00568"/>
    </source>
</evidence>
<evidence type="ECO:0000256" key="4">
    <source>
        <dbReference type="SAM" id="MobiDB-lite"/>
    </source>
</evidence>
<evidence type="ECO:0000305" key="5"/>
<reference key="1">
    <citation type="journal article" date="2004" name="Genome Res.">
        <title>The status, quality, and expansion of the NIH full-length cDNA project: the Mammalian Gene Collection (MGC).</title>
        <authorList>
            <consortium name="The MGC Project Team"/>
        </authorList>
    </citation>
    <scope>NUCLEOTIDE SEQUENCE [LARGE SCALE MRNA]</scope>
    <source>
        <tissue>Testis</tissue>
    </source>
</reference>
<keyword id="KW-0067">ATP-binding</keyword>
<keyword id="KW-0966">Cell projection</keyword>
<keyword id="KW-0969">Cilium</keyword>
<keyword id="KW-0963">Cytoplasm</keyword>
<keyword id="KW-0206">Cytoskeleton</keyword>
<keyword id="KW-0282">Flagellum</keyword>
<keyword id="KW-0436">Ligase</keyword>
<keyword id="KW-0460">Magnesium</keyword>
<keyword id="KW-0479">Metal-binding</keyword>
<keyword id="KW-0493">Microtubule</keyword>
<keyword id="KW-0547">Nucleotide-binding</keyword>
<keyword id="KW-1185">Reference proteome</keyword>
<organism>
    <name type="scientific">Rattus norvegicus</name>
    <name type="common">Rat</name>
    <dbReference type="NCBI Taxonomy" id="10116"/>
    <lineage>
        <taxon>Eukaryota</taxon>
        <taxon>Metazoa</taxon>
        <taxon>Chordata</taxon>
        <taxon>Craniata</taxon>
        <taxon>Vertebrata</taxon>
        <taxon>Euteleostomi</taxon>
        <taxon>Mammalia</taxon>
        <taxon>Eutheria</taxon>
        <taxon>Euarchontoglires</taxon>
        <taxon>Glires</taxon>
        <taxon>Rodentia</taxon>
        <taxon>Myomorpha</taxon>
        <taxon>Muroidea</taxon>
        <taxon>Muridae</taxon>
        <taxon>Murinae</taxon>
        <taxon>Rattus</taxon>
    </lineage>
</organism>